<reference key="1">
    <citation type="journal article" date="2008" name="PLoS ONE">
        <title>A recalibrated molecular clock and independent origins for the cholera pandemic clones.</title>
        <authorList>
            <person name="Feng L."/>
            <person name="Reeves P.R."/>
            <person name="Lan R."/>
            <person name="Ren Y."/>
            <person name="Gao C."/>
            <person name="Zhou Z."/>
            <person name="Ren Y."/>
            <person name="Cheng J."/>
            <person name="Wang W."/>
            <person name="Wang J."/>
            <person name="Qian W."/>
            <person name="Li D."/>
            <person name="Wang L."/>
        </authorList>
    </citation>
    <scope>NUCLEOTIDE SEQUENCE [LARGE SCALE GENOMIC DNA]</scope>
    <source>
        <strain>M66-2</strain>
    </source>
</reference>
<evidence type="ECO:0000255" key="1">
    <source>
        <dbReference type="HAMAP-Rule" id="MF_01174"/>
    </source>
</evidence>
<dbReference type="EC" id="1.2.1.71" evidence="1"/>
<dbReference type="EMBL" id="CP001233">
    <property type="protein sequence ID" value="ACP06832.1"/>
    <property type="molecule type" value="Genomic_DNA"/>
</dbReference>
<dbReference type="RefSeq" id="WP_000150145.1">
    <property type="nucleotide sequence ID" value="NC_012578.1"/>
</dbReference>
<dbReference type="SMR" id="C3LRS7"/>
<dbReference type="KEGG" id="vcm:VCM66_2536"/>
<dbReference type="HOGENOM" id="CLU_005391_1_0_6"/>
<dbReference type="UniPathway" id="UPA00185">
    <property type="reaction ID" value="UER00282"/>
</dbReference>
<dbReference type="Proteomes" id="UP000001217">
    <property type="component" value="Chromosome I"/>
</dbReference>
<dbReference type="GO" id="GO:0043824">
    <property type="term" value="F:succinylglutamate-semialdehyde dehydrogenase activity"/>
    <property type="evidence" value="ECO:0007669"/>
    <property type="project" value="UniProtKB-EC"/>
</dbReference>
<dbReference type="GO" id="GO:0019544">
    <property type="term" value="P:arginine catabolic process to glutamate"/>
    <property type="evidence" value="ECO:0007669"/>
    <property type="project" value="UniProtKB-UniRule"/>
</dbReference>
<dbReference type="GO" id="GO:0019545">
    <property type="term" value="P:arginine catabolic process to succinate"/>
    <property type="evidence" value="ECO:0007669"/>
    <property type="project" value="UniProtKB-UniRule"/>
</dbReference>
<dbReference type="CDD" id="cd07095">
    <property type="entry name" value="ALDH_SGSD_AstD"/>
    <property type="match status" value="1"/>
</dbReference>
<dbReference type="FunFam" id="3.40.605.10:FF:000010">
    <property type="entry name" value="N-succinylglutamate 5-semialdehyde dehydrogenase"/>
    <property type="match status" value="1"/>
</dbReference>
<dbReference type="Gene3D" id="3.40.605.10">
    <property type="entry name" value="Aldehyde Dehydrogenase, Chain A, domain 1"/>
    <property type="match status" value="1"/>
</dbReference>
<dbReference type="Gene3D" id="3.40.309.10">
    <property type="entry name" value="Aldehyde Dehydrogenase, Chain A, domain 2"/>
    <property type="match status" value="1"/>
</dbReference>
<dbReference type="HAMAP" id="MF_01174">
    <property type="entry name" value="Aldedh_AstD"/>
    <property type="match status" value="1"/>
</dbReference>
<dbReference type="InterPro" id="IPR016161">
    <property type="entry name" value="Ald_DH/histidinol_DH"/>
</dbReference>
<dbReference type="InterPro" id="IPR016163">
    <property type="entry name" value="Ald_DH_C"/>
</dbReference>
<dbReference type="InterPro" id="IPR016160">
    <property type="entry name" value="Ald_DH_CS_CYS"/>
</dbReference>
<dbReference type="InterPro" id="IPR029510">
    <property type="entry name" value="Ald_DH_CS_GLU"/>
</dbReference>
<dbReference type="InterPro" id="IPR016162">
    <property type="entry name" value="Ald_DH_N"/>
</dbReference>
<dbReference type="InterPro" id="IPR015590">
    <property type="entry name" value="Aldehyde_DH_dom"/>
</dbReference>
<dbReference type="InterPro" id="IPR017649">
    <property type="entry name" value="SuccinylGlu_semiald_DH_AstD"/>
</dbReference>
<dbReference type="NCBIfam" id="TIGR03240">
    <property type="entry name" value="arg_catab_astD"/>
    <property type="match status" value="1"/>
</dbReference>
<dbReference type="NCBIfam" id="NF006992">
    <property type="entry name" value="PRK09457.1"/>
    <property type="match status" value="1"/>
</dbReference>
<dbReference type="PANTHER" id="PTHR11699">
    <property type="entry name" value="ALDEHYDE DEHYDROGENASE-RELATED"/>
    <property type="match status" value="1"/>
</dbReference>
<dbReference type="Pfam" id="PF00171">
    <property type="entry name" value="Aldedh"/>
    <property type="match status" value="1"/>
</dbReference>
<dbReference type="SUPFAM" id="SSF53720">
    <property type="entry name" value="ALDH-like"/>
    <property type="match status" value="1"/>
</dbReference>
<dbReference type="PROSITE" id="PS00070">
    <property type="entry name" value="ALDEHYDE_DEHYDR_CYS"/>
    <property type="match status" value="1"/>
</dbReference>
<dbReference type="PROSITE" id="PS00687">
    <property type="entry name" value="ALDEHYDE_DEHYDR_GLU"/>
    <property type="match status" value="1"/>
</dbReference>
<proteinExistence type="inferred from homology"/>
<protein>
    <recommendedName>
        <fullName evidence="1">N-succinylglutamate 5-semialdehyde dehydrogenase</fullName>
        <ecNumber evidence="1">1.2.1.71</ecNumber>
    </recommendedName>
    <alternativeName>
        <fullName evidence="1">Succinylglutamic semialdehyde dehydrogenase</fullName>
        <shortName evidence="1">SGSD</shortName>
    </alternativeName>
</protein>
<keyword id="KW-0056">Arginine metabolism</keyword>
<keyword id="KW-0520">NAD</keyword>
<keyword id="KW-0560">Oxidoreductase</keyword>
<accession>C3LRS7</accession>
<name>ASTD_VIBCM</name>
<sequence>MTHWIAGEWVAGTGEKLQSHTPYSHELLWQGYSASGEQVDAAVNAARRAFLDWKKRPFAEREQKVLAFAELVKANSEQIAQVIAKETGKPLWETRTEAASIAGKIAISIRAYHERTGETVREAAGNQLVLRHRPLGVMAVFGPYNFPGHLPNGHIVPALLAGNTVVFKPSEQTPWTGEVLMQLWQQAGLPAGVINLVQGSKETGIALAQSRGIDGLLFTGSANTGHLLHRQFAGQPDKMLALEMGGNNPMVISEHYGDLDATVYTIIQSAFISSGQRCTCARRLYVPLGTKGDALLDKLVSVTANLRIDQPFAEPAPFMGPLVSEAAAQVILKAQADLQALGGKSLLEARALHAAFITPAIIDVTAIERLPDDEYFGPLLQVVRYQTLAQAVELANDTRFGLSAGLVSTDDGEWDYFVEHIRAGIVNRNRQLTGASGDAPFGGPGASGNLRPSAFYAADYCAYPMASMEGETTLLPATLSPGVEL</sequence>
<comment type="function">
    <text evidence="1">Catalyzes the NAD-dependent reduction of succinylglutamate semialdehyde into succinylglutamate.</text>
</comment>
<comment type="catalytic activity">
    <reaction evidence="1">
        <text>N-succinyl-L-glutamate 5-semialdehyde + NAD(+) + H2O = N-succinyl-L-glutamate + NADH + 2 H(+)</text>
        <dbReference type="Rhea" id="RHEA:10812"/>
        <dbReference type="ChEBI" id="CHEBI:15377"/>
        <dbReference type="ChEBI" id="CHEBI:15378"/>
        <dbReference type="ChEBI" id="CHEBI:57540"/>
        <dbReference type="ChEBI" id="CHEBI:57945"/>
        <dbReference type="ChEBI" id="CHEBI:58520"/>
        <dbReference type="ChEBI" id="CHEBI:58763"/>
        <dbReference type="EC" id="1.2.1.71"/>
    </reaction>
</comment>
<comment type="pathway">
    <text evidence="1">Amino-acid degradation; L-arginine degradation via AST pathway; L-glutamate and succinate from L-arginine: step 4/5.</text>
</comment>
<comment type="similarity">
    <text evidence="1">Belongs to the aldehyde dehydrogenase family. AstD subfamily.</text>
</comment>
<gene>
    <name evidence="1" type="primary">astD</name>
    <name type="ordered locus">VCM66_2536</name>
</gene>
<organism>
    <name type="scientific">Vibrio cholerae serotype O1 (strain M66-2)</name>
    <dbReference type="NCBI Taxonomy" id="579112"/>
    <lineage>
        <taxon>Bacteria</taxon>
        <taxon>Pseudomonadati</taxon>
        <taxon>Pseudomonadota</taxon>
        <taxon>Gammaproteobacteria</taxon>
        <taxon>Vibrionales</taxon>
        <taxon>Vibrionaceae</taxon>
        <taxon>Vibrio</taxon>
    </lineage>
</organism>
<feature type="chain" id="PRO_1000164407" description="N-succinylglutamate 5-semialdehyde dehydrogenase">
    <location>
        <begin position="1"/>
        <end position="485"/>
    </location>
</feature>
<feature type="active site" evidence="1">
    <location>
        <position position="243"/>
    </location>
</feature>
<feature type="active site" evidence="1">
    <location>
        <position position="278"/>
    </location>
</feature>
<feature type="binding site" evidence="1">
    <location>
        <begin position="220"/>
        <end position="225"/>
    </location>
    <ligand>
        <name>NAD(+)</name>
        <dbReference type="ChEBI" id="CHEBI:57540"/>
    </ligand>
</feature>